<sequence length="307" mass="32434">MSVTAAQVKELRELSGAGMMDCKAALAETNGDMDAAVDWLRKKGIAKADKKAGRTAAEGLIGVVSKDSHAVLVEINSETDFVARNDGFQDIVRNVATAALDTPGDVESVSVSLYPGSEKTVELTIKDAIGTIGENMTFRRSAKLSVENGVVATYIHNSVSDGLGKLGVLVAIETTGNKEAALAFGRQVAMHIAATNPLALTAQDVDAGAVEREKAIFSDQARQSGKPENIIEKMVEGRMRKFFEEVVLLSQAFVMNPDMTVEAALKDAEKSIGAPAKITGFIRFALGEGVEKEETDFAAEVAAAVKG</sequence>
<evidence type="ECO:0000255" key="1">
    <source>
        <dbReference type="HAMAP-Rule" id="MF_00050"/>
    </source>
</evidence>
<protein>
    <recommendedName>
        <fullName evidence="1">Elongation factor Ts</fullName>
        <shortName evidence="1">EF-Ts</shortName>
    </recommendedName>
</protein>
<comment type="function">
    <text evidence="1">Associates with the EF-Tu.GDP complex and induces the exchange of GDP to GTP. It remains bound to the aminoacyl-tRNA.EF-Tu.GTP complex up to the GTP hydrolysis stage on the ribosome.</text>
</comment>
<comment type="subcellular location">
    <subcellularLocation>
        <location evidence="1">Cytoplasm</location>
    </subcellularLocation>
</comment>
<comment type="similarity">
    <text evidence="1">Belongs to the EF-Ts family.</text>
</comment>
<organism>
    <name type="scientific">Bartonella tribocorum (strain CIP 105476 / IBS 506)</name>
    <dbReference type="NCBI Taxonomy" id="382640"/>
    <lineage>
        <taxon>Bacteria</taxon>
        <taxon>Pseudomonadati</taxon>
        <taxon>Pseudomonadota</taxon>
        <taxon>Alphaproteobacteria</taxon>
        <taxon>Hyphomicrobiales</taxon>
        <taxon>Bartonellaceae</taxon>
        <taxon>Bartonella</taxon>
    </lineage>
</organism>
<proteinExistence type="inferred from homology"/>
<feature type="chain" id="PRO_1000074853" description="Elongation factor Ts">
    <location>
        <begin position="1"/>
        <end position="307"/>
    </location>
</feature>
<feature type="region of interest" description="Involved in Mg(2+) ion dislocation from EF-Tu" evidence="1">
    <location>
        <begin position="79"/>
        <end position="82"/>
    </location>
</feature>
<name>EFTS_BART1</name>
<reference key="1">
    <citation type="journal article" date="2007" name="Nat. Genet.">
        <title>Genomic analysis of Bartonella identifies type IV secretion systems as host adaptability factors.</title>
        <authorList>
            <person name="Saenz H.L."/>
            <person name="Engel P."/>
            <person name="Stoeckli M.C."/>
            <person name="Lanz C."/>
            <person name="Raddatz G."/>
            <person name="Vayssier-Taussat M."/>
            <person name="Birtles R."/>
            <person name="Schuster S.C."/>
            <person name="Dehio C."/>
        </authorList>
    </citation>
    <scope>NUCLEOTIDE SEQUENCE [LARGE SCALE GENOMIC DNA]</scope>
    <source>
        <strain>CIP 105476 / IBS 506</strain>
    </source>
</reference>
<dbReference type="EMBL" id="AM260525">
    <property type="protein sequence ID" value="CAK01311.1"/>
    <property type="molecule type" value="Genomic_DNA"/>
</dbReference>
<dbReference type="RefSeq" id="WP_012231496.1">
    <property type="nucleotide sequence ID" value="NC_010161.1"/>
</dbReference>
<dbReference type="SMR" id="A9ISK1"/>
<dbReference type="KEGG" id="btr:BT_0913"/>
<dbReference type="eggNOG" id="COG0264">
    <property type="taxonomic scope" value="Bacteria"/>
</dbReference>
<dbReference type="HOGENOM" id="CLU_047155_2_0_5"/>
<dbReference type="Proteomes" id="UP000001592">
    <property type="component" value="Chromosome"/>
</dbReference>
<dbReference type="GO" id="GO:0005737">
    <property type="term" value="C:cytoplasm"/>
    <property type="evidence" value="ECO:0007669"/>
    <property type="project" value="UniProtKB-SubCell"/>
</dbReference>
<dbReference type="GO" id="GO:0003746">
    <property type="term" value="F:translation elongation factor activity"/>
    <property type="evidence" value="ECO:0007669"/>
    <property type="project" value="UniProtKB-UniRule"/>
</dbReference>
<dbReference type="CDD" id="cd14275">
    <property type="entry name" value="UBA_EF-Ts"/>
    <property type="match status" value="1"/>
</dbReference>
<dbReference type="FunFam" id="1.10.286.20:FF:000001">
    <property type="entry name" value="Elongation factor Ts"/>
    <property type="match status" value="1"/>
</dbReference>
<dbReference type="FunFam" id="1.10.8.10:FF:000001">
    <property type="entry name" value="Elongation factor Ts"/>
    <property type="match status" value="1"/>
</dbReference>
<dbReference type="Gene3D" id="1.10.286.20">
    <property type="match status" value="1"/>
</dbReference>
<dbReference type="Gene3D" id="1.10.8.10">
    <property type="entry name" value="DNA helicase RuvA subunit, C-terminal domain"/>
    <property type="match status" value="1"/>
</dbReference>
<dbReference type="Gene3D" id="3.30.479.20">
    <property type="entry name" value="Elongation factor Ts, dimerisation domain"/>
    <property type="match status" value="2"/>
</dbReference>
<dbReference type="HAMAP" id="MF_00050">
    <property type="entry name" value="EF_Ts"/>
    <property type="match status" value="1"/>
</dbReference>
<dbReference type="InterPro" id="IPR036402">
    <property type="entry name" value="EF-Ts_dimer_sf"/>
</dbReference>
<dbReference type="InterPro" id="IPR001816">
    <property type="entry name" value="Transl_elong_EFTs/EF1B"/>
</dbReference>
<dbReference type="InterPro" id="IPR014039">
    <property type="entry name" value="Transl_elong_EFTs/EF1B_dimer"/>
</dbReference>
<dbReference type="InterPro" id="IPR018101">
    <property type="entry name" value="Transl_elong_Ts_CS"/>
</dbReference>
<dbReference type="InterPro" id="IPR009060">
    <property type="entry name" value="UBA-like_sf"/>
</dbReference>
<dbReference type="NCBIfam" id="TIGR00116">
    <property type="entry name" value="tsf"/>
    <property type="match status" value="1"/>
</dbReference>
<dbReference type="PANTHER" id="PTHR11741">
    <property type="entry name" value="ELONGATION FACTOR TS"/>
    <property type="match status" value="1"/>
</dbReference>
<dbReference type="PANTHER" id="PTHR11741:SF0">
    <property type="entry name" value="ELONGATION FACTOR TS, MITOCHONDRIAL"/>
    <property type="match status" value="1"/>
</dbReference>
<dbReference type="Pfam" id="PF00889">
    <property type="entry name" value="EF_TS"/>
    <property type="match status" value="1"/>
</dbReference>
<dbReference type="SUPFAM" id="SSF54713">
    <property type="entry name" value="Elongation factor Ts (EF-Ts), dimerisation domain"/>
    <property type="match status" value="2"/>
</dbReference>
<dbReference type="SUPFAM" id="SSF46934">
    <property type="entry name" value="UBA-like"/>
    <property type="match status" value="1"/>
</dbReference>
<dbReference type="PROSITE" id="PS01127">
    <property type="entry name" value="EF_TS_2"/>
    <property type="match status" value="1"/>
</dbReference>
<accession>A9ISK1</accession>
<gene>
    <name evidence="1" type="primary">tsf</name>
    <name type="ordered locus">BT_0913</name>
</gene>
<keyword id="KW-0963">Cytoplasm</keyword>
<keyword id="KW-0251">Elongation factor</keyword>
<keyword id="KW-0648">Protein biosynthesis</keyword>